<feature type="chain" id="PRO_0000094756" description="Tyrosine-protein phosphatase non-receptor type 5">
    <location>
        <begin position="1"/>
        <end position="541"/>
    </location>
</feature>
<feature type="transmembrane region" description="Helical" evidence="3">
    <location>
        <begin position="64"/>
        <end position="84"/>
    </location>
</feature>
<feature type="transmembrane region" description="Helical" evidence="3">
    <location>
        <begin position="122"/>
        <end position="142"/>
    </location>
</feature>
<feature type="domain" description="Tyrosine-protein phosphatase" evidence="4">
    <location>
        <begin position="276"/>
        <end position="531"/>
    </location>
</feature>
<feature type="region of interest" description="Disordered" evidence="6">
    <location>
        <begin position="1"/>
        <end position="55"/>
    </location>
</feature>
<feature type="compositionally biased region" description="Pro residues" evidence="6">
    <location>
        <begin position="32"/>
        <end position="43"/>
    </location>
</feature>
<feature type="active site" description="Phosphocysteine intermediate" evidence="4 5">
    <location>
        <position position="472"/>
    </location>
</feature>
<feature type="binding site" evidence="1">
    <location>
        <position position="437"/>
    </location>
    <ligand>
        <name>substrate</name>
    </ligand>
</feature>
<feature type="binding site" evidence="1">
    <location>
        <begin position="472"/>
        <end position="478"/>
    </location>
    <ligand>
        <name>substrate</name>
    </ligand>
</feature>
<feature type="binding site" evidence="1">
    <location>
        <position position="516"/>
    </location>
    <ligand>
        <name>substrate</name>
    </ligand>
</feature>
<feature type="modified residue" description="Phosphoserine; by PKA" evidence="2">
    <location>
        <position position="221"/>
    </location>
</feature>
<feature type="modified residue" description="Phosphothreonine; by MAPK" evidence="2">
    <location>
        <position position="231"/>
    </location>
</feature>
<feature type="modified residue" description="Phosphoserine; by MAPK" evidence="2">
    <location>
        <position position="244"/>
    </location>
</feature>
<feature type="splice variant" id="VSP_005126" description="In isoform STEP20 and isoform STEP46." evidence="7">
    <location>
        <begin position="1"/>
        <end position="172"/>
    </location>
</feature>
<feature type="splice variant" id="VSP_005127" description="In isoform STEP38 and isoform STEP20." evidence="7">
    <original>GYSGEEKVYI</original>
    <variation>VCSSIPRAFH</variation>
    <location>
        <begin position="337"/>
        <end position="346"/>
    </location>
</feature>
<feature type="splice variant" id="VSP_005128" description="In isoform STEP38 and isoform STEP20." evidence="7">
    <location>
        <begin position="347"/>
        <end position="541"/>
    </location>
</feature>
<feature type="sequence conflict" description="In Ref. 1; AAA73574." evidence="8" ref="1">
    <original>S</original>
    <variation>T</variation>
    <location>
        <position position="426"/>
    </location>
</feature>
<feature type="helix" evidence="9">
    <location>
        <begin position="250"/>
        <end position="256"/>
    </location>
</feature>
<feature type="helix" evidence="9">
    <location>
        <begin position="263"/>
        <end position="270"/>
    </location>
</feature>
<feature type="helix" evidence="9">
    <location>
        <begin position="273"/>
        <end position="282"/>
    </location>
</feature>
<feature type="helix" evidence="9">
    <location>
        <begin position="290"/>
        <end position="292"/>
    </location>
</feature>
<feature type="helix" evidence="9">
    <location>
        <begin position="295"/>
        <end position="297"/>
    </location>
</feature>
<feature type="turn" evidence="9">
    <location>
        <begin position="299"/>
        <end position="301"/>
    </location>
</feature>
<feature type="helix" evidence="9">
    <location>
        <begin position="311"/>
        <end position="313"/>
    </location>
</feature>
<feature type="turn" evidence="9">
    <location>
        <begin position="325"/>
        <end position="328"/>
    </location>
</feature>
<feature type="strand" evidence="9">
    <location>
        <begin position="331"/>
        <end position="335"/>
    </location>
</feature>
<feature type="helix" evidence="9">
    <location>
        <begin position="338"/>
        <end position="340"/>
    </location>
</feature>
<feature type="strand" evidence="9">
    <location>
        <begin position="344"/>
        <end position="348"/>
    </location>
</feature>
<feature type="helix" evidence="9">
    <location>
        <begin position="353"/>
        <end position="355"/>
    </location>
</feature>
<feature type="helix" evidence="9">
    <location>
        <begin position="356"/>
        <end position="366"/>
    </location>
</feature>
<feature type="strand" evidence="9">
    <location>
        <begin position="370"/>
        <end position="374"/>
    </location>
</feature>
<feature type="helix" evidence="9">
    <location>
        <begin position="377"/>
        <end position="379"/>
    </location>
</feature>
<feature type="turn" evidence="9">
    <location>
        <begin position="380"/>
        <end position="382"/>
    </location>
</feature>
<feature type="strand" evidence="9">
    <location>
        <begin position="390"/>
        <end position="395"/>
    </location>
</feature>
<feature type="strand" evidence="9">
    <location>
        <begin position="398"/>
        <end position="407"/>
    </location>
</feature>
<feature type="strand" evidence="9">
    <location>
        <begin position="409"/>
        <end position="420"/>
    </location>
</feature>
<feature type="strand" evidence="9">
    <location>
        <begin position="423"/>
        <end position="432"/>
    </location>
</feature>
<feature type="helix" evidence="9">
    <location>
        <begin position="441"/>
        <end position="443"/>
    </location>
</feature>
<feature type="helix" evidence="9">
    <location>
        <begin position="444"/>
        <end position="459"/>
    </location>
</feature>
<feature type="strand" evidence="9">
    <location>
        <begin position="468"/>
        <end position="471"/>
    </location>
</feature>
<feature type="strand" evidence="9">
    <location>
        <begin position="473"/>
        <end position="476"/>
    </location>
</feature>
<feature type="helix" evidence="9">
    <location>
        <begin position="477"/>
        <end position="495"/>
    </location>
</feature>
<feature type="helix" evidence="9">
    <location>
        <begin position="500"/>
        <end position="510"/>
    </location>
</feature>
<feature type="helix" evidence="9">
    <location>
        <begin position="518"/>
        <end position="536"/>
    </location>
</feature>
<sequence>MCCSERLLGLPQPVEMEAPDEAEGLPSKQKEMPPPPPPSPPSEPAQKLPPQGAGSHSLTVRSSLCLFAASQFLLACGVLWLSGHGHSWLQNTTDLISSSLTVLNHLGPVAWLGSGTWGIPSLLLVSLTVSLVIVTTLVWHLLKAPPEPPAPLPPEDRRQSVSRQPSFTYSEWMEEKVEDDFLDLDAVPETPVFDCVMDIKPETDPASLTVKSMGLQERRGSNVSLTLDMCTPGCNEEGFGYLVSPREESAHEYLLSASRVLRAEELHEKALDPFLLQAEFFEIPMNFVDPKEYDIPGLVRKNRYKTILPNPHSRVRLTSPDPEDPLSSYINANYIRGYSGEEKVYIATQGPIVSTVADFWRMVWQERTPIIVMITNIEEMNEKCTEYWPEEQVVHDGVEITVQKVIHTEDYRLRLISLRRGTEERSLKHYWFTSWPDQKTPDRAPPLLHLVREVEEAAQQEGPHCSPIIVHCSAGIGRTGCFIATSICCQQLRREGVVDILKTTCQLRQDRGGMIQTCEQYQFVHHAMSLYEKQLSLQSSE</sequence>
<keyword id="KW-0002">3D-structure</keyword>
<keyword id="KW-0025">Alternative splicing</keyword>
<keyword id="KW-0963">Cytoplasm</keyword>
<keyword id="KW-0256">Endoplasmic reticulum</keyword>
<keyword id="KW-0378">Hydrolase</keyword>
<keyword id="KW-0472">Membrane</keyword>
<keyword id="KW-0597">Phosphoprotein</keyword>
<keyword id="KW-0904">Protein phosphatase</keyword>
<keyword id="KW-1185">Reference proteome</keyword>
<keyword id="KW-0812">Transmembrane</keyword>
<keyword id="KW-1133">Transmembrane helix</keyword>
<gene>
    <name type="primary">Ptpn5</name>
</gene>
<comment type="function">
    <text evidence="1">May regulate the activity of several effector molecules involved in synaptic plasticity and neuronal cell survival, including MAPKs, Src family kinases and NMDA receptors.</text>
</comment>
<comment type="catalytic activity">
    <reaction evidence="5">
        <text>O-phospho-L-tyrosyl-[protein] + H2O = L-tyrosyl-[protein] + phosphate</text>
        <dbReference type="Rhea" id="RHEA:10684"/>
        <dbReference type="Rhea" id="RHEA-COMP:10136"/>
        <dbReference type="Rhea" id="RHEA-COMP:20101"/>
        <dbReference type="ChEBI" id="CHEBI:15377"/>
        <dbReference type="ChEBI" id="CHEBI:43474"/>
        <dbReference type="ChEBI" id="CHEBI:46858"/>
        <dbReference type="ChEBI" id="CHEBI:61978"/>
        <dbReference type="EC" id="3.1.3.48"/>
    </reaction>
</comment>
<comment type="interaction">
    <interactant intactId="EBI-16067443">
        <id>P54830-1</id>
    </interactant>
    <interactant intactId="EBI-15834191">
        <id>Q16539-1</id>
        <label>MAPK14</label>
    </interactant>
    <organismsDiffer>true</organismsDiffer>
    <experiments>6</experiments>
</comment>
<comment type="subcellular location">
    <molecule>Isoform STEP61</molecule>
    <subcellularLocation>
        <location>Endoplasmic reticulum membrane</location>
        <topology>Multi-pass membrane protein</topology>
    </subcellularLocation>
</comment>
<comment type="subcellular location">
    <molecule>Isoform STEP46</molecule>
    <subcellularLocation>
        <location>Cytoplasm</location>
    </subcellularLocation>
</comment>
<comment type="alternative products">
    <event type="alternative splicing"/>
    <isoform>
        <id>P54830-1</id>
        <name>STEP61</name>
        <sequence type="displayed"/>
    </isoform>
    <isoform>
        <id>P54830-2</id>
        <name>STEP46</name>
        <sequence type="described" ref="VSP_005126"/>
    </isoform>
    <isoform>
        <id>P54830-3</id>
        <name>STEP38</name>
        <sequence type="described" ref="VSP_005127 VSP_005128"/>
    </isoform>
    <isoform>
        <id>P54830-4</id>
        <name>STEP20</name>
        <sequence type="described" ref="VSP_005126 VSP_005127 VSP_005128"/>
    </isoform>
    <text>Additional isoforms seem to exist.</text>
</comment>
<comment type="tissue specificity">
    <text>STEP20 is expressed only in the CNS.</text>
</comment>
<comment type="PTM">
    <text evidence="1">Phosphorylation at Ser-221 by PKA deactivates PTPN5. Phosphorylation at Thr-231 and Ser-244 by MAPKs stabilizes the phosphatase, dephosphorylation of these sites results in ubiquitin-mediated degradation of the active phosphatase (By similarity).</text>
</comment>
<comment type="miscellaneous">
    <molecule>Isoform STEP38</molecule>
    <text evidence="8">Lacks the catalytic domain.</text>
</comment>
<comment type="miscellaneous">
    <molecule>Isoform STEP20</molecule>
    <text evidence="8">Lacks the catalytic domain.</text>
</comment>
<comment type="similarity">
    <text evidence="8">Belongs to the protein-tyrosine phosphatase family. Non-receptor class subfamily.</text>
</comment>
<name>PTN5_MOUSE</name>
<evidence type="ECO:0000250" key="1"/>
<evidence type="ECO:0000250" key="2">
    <source>
        <dbReference type="UniProtKB" id="P54829"/>
    </source>
</evidence>
<evidence type="ECO:0000255" key="3"/>
<evidence type="ECO:0000255" key="4">
    <source>
        <dbReference type="PROSITE-ProRule" id="PRU00160"/>
    </source>
</evidence>
<evidence type="ECO:0000255" key="5">
    <source>
        <dbReference type="PROSITE-ProRule" id="PRU10044"/>
    </source>
</evidence>
<evidence type="ECO:0000256" key="6">
    <source>
        <dbReference type="SAM" id="MobiDB-lite"/>
    </source>
</evidence>
<evidence type="ECO:0000303" key="7">
    <source>
    </source>
</evidence>
<evidence type="ECO:0000305" key="8"/>
<evidence type="ECO:0007829" key="9">
    <source>
        <dbReference type="PDB" id="6H8S"/>
    </source>
</evidence>
<protein>
    <recommendedName>
        <fullName>Tyrosine-protein phosphatase non-receptor type 5</fullName>
        <ecNumber>3.1.3.48</ecNumber>
    </recommendedName>
    <alternativeName>
        <fullName>Neural-specific protein-tyrosine phosphatase</fullName>
    </alternativeName>
    <alternativeName>
        <fullName>Striatum-enriched protein-tyrosine phosphatase</fullName>
        <shortName>STEP</shortName>
    </alternativeName>
</protein>
<reference key="1">
    <citation type="journal article" date="1995" name="Brain Res. Mol. Brain Res.">
        <title>Identification of two alternatively spliced transcripts of STEP: a subfamily of brain-enriched protein tyrosine phosphatases.</title>
        <authorList>
            <person name="Sharma E."/>
            <person name="Zhao F."/>
            <person name="Bult A."/>
            <person name="Lombroso P.J."/>
        </authorList>
    </citation>
    <scope>NUCLEOTIDE SEQUENCE [MRNA] (ISOFORMS STEP20; STEP38; STEP46 AND STEP61)</scope>
    <source>
        <strain>BALB/cJ</strain>
        <tissue>Brain</tissue>
    </source>
</reference>
<reference key="2">
    <citation type="journal article" date="2005" name="Science">
        <title>The transcriptional landscape of the mammalian genome.</title>
        <authorList>
            <person name="Carninci P."/>
            <person name="Kasukawa T."/>
            <person name="Katayama S."/>
            <person name="Gough J."/>
            <person name="Frith M.C."/>
            <person name="Maeda N."/>
            <person name="Oyama R."/>
            <person name="Ravasi T."/>
            <person name="Lenhard B."/>
            <person name="Wells C."/>
            <person name="Kodzius R."/>
            <person name="Shimokawa K."/>
            <person name="Bajic V.B."/>
            <person name="Brenner S.E."/>
            <person name="Batalov S."/>
            <person name="Forrest A.R."/>
            <person name="Zavolan M."/>
            <person name="Davis M.J."/>
            <person name="Wilming L.G."/>
            <person name="Aidinis V."/>
            <person name="Allen J.E."/>
            <person name="Ambesi-Impiombato A."/>
            <person name="Apweiler R."/>
            <person name="Aturaliya R.N."/>
            <person name="Bailey T.L."/>
            <person name="Bansal M."/>
            <person name="Baxter L."/>
            <person name="Beisel K.W."/>
            <person name="Bersano T."/>
            <person name="Bono H."/>
            <person name="Chalk A.M."/>
            <person name="Chiu K.P."/>
            <person name="Choudhary V."/>
            <person name="Christoffels A."/>
            <person name="Clutterbuck D.R."/>
            <person name="Crowe M.L."/>
            <person name="Dalla E."/>
            <person name="Dalrymple B.P."/>
            <person name="de Bono B."/>
            <person name="Della Gatta G."/>
            <person name="di Bernardo D."/>
            <person name="Down T."/>
            <person name="Engstrom P."/>
            <person name="Fagiolini M."/>
            <person name="Faulkner G."/>
            <person name="Fletcher C.F."/>
            <person name="Fukushima T."/>
            <person name="Furuno M."/>
            <person name="Futaki S."/>
            <person name="Gariboldi M."/>
            <person name="Georgii-Hemming P."/>
            <person name="Gingeras T.R."/>
            <person name="Gojobori T."/>
            <person name="Green R.E."/>
            <person name="Gustincich S."/>
            <person name="Harbers M."/>
            <person name="Hayashi Y."/>
            <person name="Hensch T.K."/>
            <person name="Hirokawa N."/>
            <person name="Hill D."/>
            <person name="Huminiecki L."/>
            <person name="Iacono M."/>
            <person name="Ikeo K."/>
            <person name="Iwama A."/>
            <person name="Ishikawa T."/>
            <person name="Jakt M."/>
            <person name="Kanapin A."/>
            <person name="Katoh M."/>
            <person name="Kawasawa Y."/>
            <person name="Kelso J."/>
            <person name="Kitamura H."/>
            <person name="Kitano H."/>
            <person name="Kollias G."/>
            <person name="Krishnan S.P."/>
            <person name="Kruger A."/>
            <person name="Kummerfeld S.K."/>
            <person name="Kurochkin I.V."/>
            <person name="Lareau L.F."/>
            <person name="Lazarevic D."/>
            <person name="Lipovich L."/>
            <person name="Liu J."/>
            <person name="Liuni S."/>
            <person name="McWilliam S."/>
            <person name="Madan Babu M."/>
            <person name="Madera M."/>
            <person name="Marchionni L."/>
            <person name="Matsuda H."/>
            <person name="Matsuzawa S."/>
            <person name="Miki H."/>
            <person name="Mignone F."/>
            <person name="Miyake S."/>
            <person name="Morris K."/>
            <person name="Mottagui-Tabar S."/>
            <person name="Mulder N."/>
            <person name="Nakano N."/>
            <person name="Nakauchi H."/>
            <person name="Ng P."/>
            <person name="Nilsson R."/>
            <person name="Nishiguchi S."/>
            <person name="Nishikawa S."/>
            <person name="Nori F."/>
            <person name="Ohara O."/>
            <person name="Okazaki Y."/>
            <person name="Orlando V."/>
            <person name="Pang K.C."/>
            <person name="Pavan W.J."/>
            <person name="Pavesi G."/>
            <person name="Pesole G."/>
            <person name="Petrovsky N."/>
            <person name="Piazza S."/>
            <person name="Reed J."/>
            <person name="Reid J.F."/>
            <person name="Ring B.Z."/>
            <person name="Ringwald M."/>
            <person name="Rost B."/>
            <person name="Ruan Y."/>
            <person name="Salzberg S.L."/>
            <person name="Sandelin A."/>
            <person name="Schneider C."/>
            <person name="Schoenbach C."/>
            <person name="Sekiguchi K."/>
            <person name="Semple C.A."/>
            <person name="Seno S."/>
            <person name="Sessa L."/>
            <person name="Sheng Y."/>
            <person name="Shibata Y."/>
            <person name="Shimada H."/>
            <person name="Shimada K."/>
            <person name="Silva D."/>
            <person name="Sinclair B."/>
            <person name="Sperling S."/>
            <person name="Stupka E."/>
            <person name="Sugiura K."/>
            <person name="Sultana R."/>
            <person name="Takenaka Y."/>
            <person name="Taki K."/>
            <person name="Tammoja K."/>
            <person name="Tan S.L."/>
            <person name="Tang S."/>
            <person name="Taylor M.S."/>
            <person name="Tegner J."/>
            <person name="Teichmann S.A."/>
            <person name="Ueda H.R."/>
            <person name="van Nimwegen E."/>
            <person name="Verardo R."/>
            <person name="Wei C.L."/>
            <person name="Yagi K."/>
            <person name="Yamanishi H."/>
            <person name="Zabarovsky E."/>
            <person name="Zhu S."/>
            <person name="Zimmer A."/>
            <person name="Hide W."/>
            <person name="Bult C."/>
            <person name="Grimmond S.M."/>
            <person name="Teasdale R.D."/>
            <person name="Liu E.T."/>
            <person name="Brusic V."/>
            <person name="Quackenbush J."/>
            <person name="Wahlestedt C."/>
            <person name="Mattick J.S."/>
            <person name="Hume D.A."/>
            <person name="Kai C."/>
            <person name="Sasaki D."/>
            <person name="Tomaru Y."/>
            <person name="Fukuda S."/>
            <person name="Kanamori-Katayama M."/>
            <person name="Suzuki M."/>
            <person name="Aoki J."/>
            <person name="Arakawa T."/>
            <person name="Iida J."/>
            <person name="Imamura K."/>
            <person name="Itoh M."/>
            <person name="Kato T."/>
            <person name="Kawaji H."/>
            <person name="Kawagashira N."/>
            <person name="Kawashima T."/>
            <person name="Kojima M."/>
            <person name="Kondo S."/>
            <person name="Konno H."/>
            <person name="Nakano K."/>
            <person name="Ninomiya N."/>
            <person name="Nishio T."/>
            <person name="Okada M."/>
            <person name="Plessy C."/>
            <person name="Shibata K."/>
            <person name="Shiraki T."/>
            <person name="Suzuki S."/>
            <person name="Tagami M."/>
            <person name="Waki K."/>
            <person name="Watahiki A."/>
            <person name="Okamura-Oho Y."/>
            <person name="Suzuki H."/>
            <person name="Kawai J."/>
            <person name="Hayashizaki Y."/>
        </authorList>
    </citation>
    <scope>NUCLEOTIDE SEQUENCE [LARGE SCALE MRNA] (ISOFORM STEP61)</scope>
    <source>
        <strain>C57BL/6J</strain>
        <tissue>Hypothalamus</tissue>
    </source>
</reference>
<reference key="3">
    <citation type="submission" date="2005-07" db="EMBL/GenBank/DDBJ databases">
        <authorList>
            <person name="Mural R.J."/>
            <person name="Adams M.D."/>
            <person name="Myers E.W."/>
            <person name="Smith H.O."/>
            <person name="Venter J.C."/>
        </authorList>
    </citation>
    <scope>NUCLEOTIDE SEQUENCE [LARGE SCALE GENOMIC DNA]</scope>
</reference>
<reference key="4">
    <citation type="journal article" date="2004" name="Genome Res.">
        <title>The status, quality, and expansion of the NIH full-length cDNA project: the Mammalian Gene Collection (MGC).</title>
        <authorList>
            <consortium name="The MGC Project Team"/>
        </authorList>
    </citation>
    <scope>NUCLEOTIDE SEQUENCE [LARGE SCALE MRNA] (ISOFORM STEP61)</scope>
    <source>
        <strain>C57BL/6J</strain>
        <tissue>Brain</tissue>
    </source>
</reference>
<reference key="5">
    <citation type="journal article" date="1996" name="J. Neurosci.">
        <title>STEP61: a member of a family of brain-enriched PTPs is localized to the endoplasmic reticulum.</title>
        <authorList>
            <person name="Bult A."/>
            <person name="Zhao F."/>
            <person name="Dirkx R. Jr."/>
            <person name="Sharma E."/>
            <person name="Lukacsi E."/>
            <person name="Solimena M."/>
            <person name="Naegele J.R."/>
            <person name="Lombroso P.J."/>
        </authorList>
    </citation>
    <scope>SUBCELLULAR LOCATION</scope>
</reference>
<reference key="6">
    <citation type="journal article" date="2010" name="Cell">
        <title>A tissue-specific atlas of mouse protein phosphorylation and expression.</title>
        <authorList>
            <person name="Huttlin E.L."/>
            <person name="Jedrychowski M.P."/>
            <person name="Elias J.E."/>
            <person name="Goswami T."/>
            <person name="Rad R."/>
            <person name="Beausoleil S.A."/>
            <person name="Villen J."/>
            <person name="Haas W."/>
            <person name="Sowa M.E."/>
            <person name="Gygi S.P."/>
        </authorList>
    </citation>
    <scope>IDENTIFICATION BY MASS SPECTROMETRY [LARGE SCALE ANALYSIS]</scope>
    <source>
        <tissue>Brain</tissue>
    </source>
</reference>
<organism>
    <name type="scientific">Mus musculus</name>
    <name type="common">Mouse</name>
    <dbReference type="NCBI Taxonomy" id="10090"/>
    <lineage>
        <taxon>Eukaryota</taxon>
        <taxon>Metazoa</taxon>
        <taxon>Chordata</taxon>
        <taxon>Craniata</taxon>
        <taxon>Vertebrata</taxon>
        <taxon>Euteleostomi</taxon>
        <taxon>Mammalia</taxon>
        <taxon>Eutheria</taxon>
        <taxon>Euarchontoglires</taxon>
        <taxon>Glires</taxon>
        <taxon>Rodentia</taxon>
        <taxon>Myomorpha</taxon>
        <taxon>Muroidea</taxon>
        <taxon>Muridae</taxon>
        <taxon>Murinae</taxon>
        <taxon>Mus</taxon>
        <taxon>Mus</taxon>
    </lineage>
</organism>
<accession>P54830</accession>
<accession>Q64694</accession>
<accession>Q8CAN0</accession>
<dbReference type="EC" id="3.1.3.48"/>
<dbReference type="EMBL" id="U28217">
    <property type="protein sequence ID" value="AAA73574.1"/>
    <property type="molecule type" value="mRNA"/>
</dbReference>
<dbReference type="EMBL" id="U28216">
    <property type="protein sequence ID" value="AAA73573.1"/>
    <property type="molecule type" value="mRNA"/>
</dbReference>
<dbReference type="EMBL" id="S80329">
    <property type="protein sequence ID" value="AAB35656.2"/>
    <property type="molecule type" value="mRNA"/>
</dbReference>
<dbReference type="EMBL" id="AK038416">
    <property type="protein sequence ID" value="BAC29993.1"/>
    <property type="molecule type" value="mRNA"/>
</dbReference>
<dbReference type="EMBL" id="CH466603">
    <property type="protein sequence ID" value="EDL22958.1"/>
    <property type="molecule type" value="Genomic_DNA"/>
</dbReference>
<dbReference type="EMBL" id="BC079592">
    <property type="protein sequence ID" value="AAH79592.1"/>
    <property type="molecule type" value="mRNA"/>
</dbReference>
<dbReference type="CCDS" id="CCDS21294.1">
    <molecule id="P54830-1"/>
</dbReference>
<dbReference type="RefSeq" id="NP_001157037.1">
    <molecule id="P54830-1"/>
    <property type="nucleotide sequence ID" value="NM_001163565.2"/>
</dbReference>
<dbReference type="RefSeq" id="NP_001404109.1">
    <molecule id="P54830-1"/>
    <property type="nucleotide sequence ID" value="NM_001417180.1"/>
</dbReference>
<dbReference type="RefSeq" id="NP_038671.2">
    <molecule id="P54830-1"/>
    <property type="nucleotide sequence ID" value="NM_013643.3"/>
</dbReference>
<dbReference type="RefSeq" id="XP_006540776.1">
    <molecule id="P54830-1"/>
    <property type="nucleotide sequence ID" value="XM_006540713.4"/>
</dbReference>
<dbReference type="RefSeq" id="XP_006540777.1">
    <molecule id="P54830-1"/>
    <property type="nucleotide sequence ID" value="XM_006540714.4"/>
</dbReference>
<dbReference type="RefSeq" id="XP_006540778.1">
    <property type="nucleotide sequence ID" value="XM_006540715.3"/>
</dbReference>
<dbReference type="RefSeq" id="XP_017177535.1">
    <molecule id="P54830-1"/>
    <property type="nucleotide sequence ID" value="XM_017322046.2"/>
</dbReference>
<dbReference type="RefSeq" id="XP_030098098.1">
    <molecule id="P54830-1"/>
    <property type="nucleotide sequence ID" value="XM_030242238.1"/>
</dbReference>
<dbReference type="RefSeq" id="XP_036008691.1">
    <molecule id="P54830-1"/>
    <property type="nucleotide sequence ID" value="XM_036152798.1"/>
</dbReference>
<dbReference type="RefSeq" id="XP_036008692.1">
    <molecule id="P54830-1"/>
    <property type="nucleotide sequence ID" value="XM_036152799.1"/>
</dbReference>
<dbReference type="PDB" id="6H8S">
    <property type="method" value="X-ray"/>
    <property type="resolution" value="1.77 A"/>
    <property type="chains" value="A=244-539"/>
</dbReference>
<dbReference type="PDBsum" id="6H8S"/>
<dbReference type="BMRB" id="P54830"/>
<dbReference type="SMR" id="P54830"/>
<dbReference type="BioGRID" id="202488">
    <property type="interactions" value="17"/>
</dbReference>
<dbReference type="DIP" id="DIP-32453N"/>
<dbReference type="ELM" id="P54830"/>
<dbReference type="FunCoup" id="P54830">
    <property type="interactions" value="800"/>
</dbReference>
<dbReference type="IntAct" id="P54830">
    <property type="interactions" value="2"/>
</dbReference>
<dbReference type="MINT" id="P54830"/>
<dbReference type="STRING" id="10090.ENSMUSP00000033142"/>
<dbReference type="ChEMBL" id="CHEMBL4523242"/>
<dbReference type="GlyGen" id="P54830">
    <property type="glycosylation" value="1 site, 1 O-linked glycan (1 site)"/>
</dbReference>
<dbReference type="iPTMnet" id="P54830"/>
<dbReference type="PhosphoSitePlus" id="P54830"/>
<dbReference type="SwissPalm" id="P54830"/>
<dbReference type="PaxDb" id="10090-ENSMUSP00000033142"/>
<dbReference type="PeptideAtlas" id="P54830"/>
<dbReference type="ProteomicsDB" id="301876">
    <molecule id="P54830-1"/>
</dbReference>
<dbReference type="ProteomicsDB" id="301877">
    <molecule id="P54830-2"/>
</dbReference>
<dbReference type="ProteomicsDB" id="301878">
    <molecule id="P54830-3"/>
</dbReference>
<dbReference type="ProteomicsDB" id="301879">
    <molecule id="P54830-4"/>
</dbReference>
<dbReference type="Antibodypedia" id="25176">
    <property type="antibodies" value="295 antibodies from 30 providers"/>
</dbReference>
<dbReference type="DNASU" id="19259"/>
<dbReference type="Ensembl" id="ENSMUST00000033142.13">
    <molecule id="P54830-1"/>
    <property type="protein sequence ID" value="ENSMUSP00000033142.6"/>
    <property type="gene ID" value="ENSMUSG00000030854.18"/>
</dbReference>
<dbReference type="Ensembl" id="ENSMUST00000102626.10">
    <molecule id="P54830-1"/>
    <property type="protein sequence ID" value="ENSMUSP00000099686.2"/>
    <property type="gene ID" value="ENSMUSG00000030854.18"/>
</dbReference>
<dbReference type="GeneID" id="19259"/>
<dbReference type="KEGG" id="mmu:19259"/>
<dbReference type="UCSC" id="uc009gzz.2">
    <molecule id="P54830-1"/>
    <property type="organism name" value="mouse"/>
</dbReference>
<dbReference type="UCSC" id="uc009hac.1">
    <molecule id="P54830-3"/>
    <property type="organism name" value="mouse"/>
</dbReference>
<dbReference type="AGR" id="MGI:97807"/>
<dbReference type="CTD" id="84867"/>
<dbReference type="MGI" id="MGI:97807">
    <property type="gene designation" value="Ptpn5"/>
</dbReference>
<dbReference type="VEuPathDB" id="HostDB:ENSMUSG00000030854"/>
<dbReference type="eggNOG" id="KOG0789">
    <property type="taxonomic scope" value="Eukaryota"/>
</dbReference>
<dbReference type="GeneTree" id="ENSGT00940000159916"/>
<dbReference type="HOGENOM" id="CLU_001645_10_2_1"/>
<dbReference type="InParanoid" id="P54830"/>
<dbReference type="OMA" id="TKQHNWI"/>
<dbReference type="OrthoDB" id="9993594at2759"/>
<dbReference type="PhylomeDB" id="P54830"/>
<dbReference type="TreeFam" id="TF331016"/>
<dbReference type="BioGRID-ORCS" id="19259">
    <property type="hits" value="4 hits in 79 CRISPR screens"/>
</dbReference>
<dbReference type="ChiTaRS" id="Ptpn5">
    <property type="organism name" value="mouse"/>
</dbReference>
<dbReference type="PRO" id="PR:P54830"/>
<dbReference type="Proteomes" id="UP000000589">
    <property type="component" value="Chromosome 7"/>
</dbReference>
<dbReference type="RNAct" id="P54830">
    <property type="molecule type" value="protein"/>
</dbReference>
<dbReference type="Bgee" id="ENSMUSG00000030854">
    <property type="expression patterns" value="Expressed in caudate-putamen and 126 other cell types or tissues"/>
</dbReference>
<dbReference type="GO" id="GO:0005789">
    <property type="term" value="C:endoplasmic reticulum membrane"/>
    <property type="evidence" value="ECO:0007669"/>
    <property type="project" value="UniProtKB-SubCell"/>
</dbReference>
<dbReference type="GO" id="GO:0001784">
    <property type="term" value="F:phosphotyrosine residue binding"/>
    <property type="evidence" value="ECO:0007669"/>
    <property type="project" value="Ensembl"/>
</dbReference>
<dbReference type="GO" id="GO:0004725">
    <property type="term" value="F:protein tyrosine phosphatase activity"/>
    <property type="evidence" value="ECO:0000315"/>
    <property type="project" value="MGI"/>
</dbReference>
<dbReference type="CDD" id="cd14613">
    <property type="entry name" value="PTPc-N5"/>
    <property type="match status" value="1"/>
</dbReference>
<dbReference type="FunFam" id="3.90.190.10:FF:000020">
    <property type="entry name" value="Tyrosine-protein phosphatase non-receptor type 5"/>
    <property type="match status" value="1"/>
</dbReference>
<dbReference type="Gene3D" id="3.90.190.10">
    <property type="entry name" value="Protein tyrosine phosphatase superfamily"/>
    <property type="match status" value="1"/>
</dbReference>
<dbReference type="InterPro" id="IPR029021">
    <property type="entry name" value="Prot-tyrosine_phosphatase-like"/>
</dbReference>
<dbReference type="InterPro" id="IPR000242">
    <property type="entry name" value="PTP_cat"/>
</dbReference>
<dbReference type="InterPro" id="IPR016130">
    <property type="entry name" value="Tyr_Pase_AS"/>
</dbReference>
<dbReference type="InterPro" id="IPR003595">
    <property type="entry name" value="Tyr_Pase_cat"/>
</dbReference>
<dbReference type="InterPro" id="IPR000387">
    <property type="entry name" value="Tyr_Pase_dom"/>
</dbReference>
<dbReference type="InterPro" id="IPR008356">
    <property type="entry name" value="Tyr_Pase_KIM-con"/>
</dbReference>
<dbReference type="InterPro" id="IPR016334">
    <property type="entry name" value="Tyr_Pase_rcpt_R/non-rcpt_5"/>
</dbReference>
<dbReference type="PANTHER" id="PTHR46198">
    <property type="entry name" value="PROTEIN-TYROSINE-PHOSPHATASE"/>
    <property type="match status" value="1"/>
</dbReference>
<dbReference type="PANTHER" id="PTHR46198:SF1">
    <property type="entry name" value="TYROSINE-PROTEIN PHOSPHATASE NON-RECEPTOR TYPE 5"/>
    <property type="match status" value="1"/>
</dbReference>
<dbReference type="Pfam" id="PF00102">
    <property type="entry name" value="Y_phosphatase"/>
    <property type="match status" value="1"/>
</dbReference>
<dbReference type="PIRSF" id="PIRSF001997">
    <property type="entry name" value="PTPRR"/>
    <property type="match status" value="1"/>
</dbReference>
<dbReference type="PRINTS" id="PR01778">
    <property type="entry name" value="KIMPTPASE"/>
</dbReference>
<dbReference type="PRINTS" id="PR00700">
    <property type="entry name" value="PRTYPHPHTASE"/>
</dbReference>
<dbReference type="SMART" id="SM00194">
    <property type="entry name" value="PTPc"/>
    <property type="match status" value="1"/>
</dbReference>
<dbReference type="SMART" id="SM00404">
    <property type="entry name" value="PTPc_motif"/>
    <property type="match status" value="1"/>
</dbReference>
<dbReference type="SUPFAM" id="SSF52799">
    <property type="entry name" value="(Phosphotyrosine protein) phosphatases II"/>
    <property type="match status" value="1"/>
</dbReference>
<dbReference type="PROSITE" id="PS00383">
    <property type="entry name" value="TYR_PHOSPHATASE_1"/>
    <property type="match status" value="1"/>
</dbReference>
<dbReference type="PROSITE" id="PS50056">
    <property type="entry name" value="TYR_PHOSPHATASE_2"/>
    <property type="match status" value="1"/>
</dbReference>
<dbReference type="PROSITE" id="PS50055">
    <property type="entry name" value="TYR_PHOSPHATASE_PTP"/>
    <property type="match status" value="1"/>
</dbReference>
<proteinExistence type="evidence at protein level"/>